<keyword id="KW-0963">Cytoplasm</keyword>
<keyword id="KW-0489">Methyltransferase</keyword>
<keyword id="KW-1185">Reference proteome</keyword>
<keyword id="KW-0949">S-adenosyl-L-methionine</keyword>
<keyword id="KW-0808">Transferase</keyword>
<keyword id="KW-0819">tRNA processing</keyword>
<organism>
    <name type="scientific">Methanopyrus kandleri (strain AV19 / DSM 6324 / JCM 9639 / NBRC 100938)</name>
    <dbReference type="NCBI Taxonomy" id="190192"/>
    <lineage>
        <taxon>Archaea</taxon>
        <taxon>Methanobacteriati</taxon>
        <taxon>Methanobacteriota</taxon>
        <taxon>Methanomada group</taxon>
        <taxon>Methanopyri</taxon>
        <taxon>Methanopyrales</taxon>
        <taxon>Methanopyraceae</taxon>
        <taxon>Methanopyrus</taxon>
    </lineage>
</organism>
<proteinExistence type="inferred from homology"/>
<accession>Q8TWL5</accession>
<evidence type="ECO:0000255" key="1">
    <source>
        <dbReference type="HAMAP-Rule" id="MF_00587"/>
    </source>
</evidence>
<protein>
    <recommendedName>
        <fullName evidence="1">tRNA (pseudouridine(54)-N(1))-methyltransferase</fullName>
        <ecNumber evidence="1">2.1.1.257</ecNumber>
    </recommendedName>
</protein>
<gene>
    <name evidence="1" type="primary">trmY</name>
    <name type="ordered locus">MK1018</name>
</gene>
<dbReference type="EC" id="2.1.1.257" evidence="1"/>
<dbReference type="EMBL" id="AE009439">
    <property type="protein sequence ID" value="AAM02231.1"/>
    <property type="molecule type" value="Genomic_DNA"/>
</dbReference>
<dbReference type="RefSeq" id="WP_011019386.1">
    <property type="nucleotide sequence ID" value="NC_003551.1"/>
</dbReference>
<dbReference type="SMR" id="Q8TWL5"/>
<dbReference type="STRING" id="190192.MK1018"/>
<dbReference type="PaxDb" id="190192-MK1018"/>
<dbReference type="EnsemblBacteria" id="AAM02231">
    <property type="protein sequence ID" value="AAM02231"/>
    <property type="gene ID" value="MK1018"/>
</dbReference>
<dbReference type="GeneID" id="1477119"/>
<dbReference type="KEGG" id="mka:MK1018"/>
<dbReference type="HOGENOM" id="CLU_107018_0_0_2"/>
<dbReference type="InParanoid" id="Q8TWL5"/>
<dbReference type="OrthoDB" id="27492at2157"/>
<dbReference type="Proteomes" id="UP000001826">
    <property type="component" value="Chromosome"/>
</dbReference>
<dbReference type="GO" id="GO:0005737">
    <property type="term" value="C:cytoplasm"/>
    <property type="evidence" value="ECO:0007669"/>
    <property type="project" value="UniProtKB-SubCell"/>
</dbReference>
<dbReference type="GO" id="GO:0008757">
    <property type="term" value="F:S-adenosylmethionine-dependent methyltransferase activity"/>
    <property type="evidence" value="ECO:0007669"/>
    <property type="project" value="UniProtKB-UniRule"/>
</dbReference>
<dbReference type="GO" id="GO:0008175">
    <property type="term" value="F:tRNA methyltransferase activity"/>
    <property type="evidence" value="ECO:0007669"/>
    <property type="project" value="UniProtKB-UniRule"/>
</dbReference>
<dbReference type="GO" id="GO:0030488">
    <property type="term" value="P:tRNA methylation"/>
    <property type="evidence" value="ECO:0007669"/>
    <property type="project" value="UniProtKB-UniRule"/>
</dbReference>
<dbReference type="CDD" id="cd18087">
    <property type="entry name" value="TrmY-like"/>
    <property type="match status" value="1"/>
</dbReference>
<dbReference type="Gene3D" id="3.40.1280.10">
    <property type="match status" value="1"/>
</dbReference>
<dbReference type="HAMAP" id="MF_00587">
    <property type="entry name" value="tRNA_methyltr_TrmY"/>
    <property type="match status" value="1"/>
</dbReference>
<dbReference type="InterPro" id="IPR029028">
    <property type="entry name" value="Alpha/beta_knot_MTases"/>
</dbReference>
<dbReference type="InterPro" id="IPR007158">
    <property type="entry name" value="TrmY"/>
</dbReference>
<dbReference type="InterPro" id="IPR029026">
    <property type="entry name" value="tRNA_m1G_MTases_N"/>
</dbReference>
<dbReference type="NCBIfam" id="NF002560">
    <property type="entry name" value="PRK02135.1"/>
    <property type="match status" value="1"/>
</dbReference>
<dbReference type="PANTHER" id="PTHR40703">
    <property type="entry name" value="TRNA (PSEUDOURIDINE(54)-N(1))-METHYLTRANSFERASE"/>
    <property type="match status" value="1"/>
</dbReference>
<dbReference type="PANTHER" id="PTHR40703:SF1">
    <property type="entry name" value="TRNA (PSEUDOURIDINE(54)-N(1))-METHYLTRANSFERASE"/>
    <property type="match status" value="1"/>
</dbReference>
<dbReference type="Pfam" id="PF04013">
    <property type="entry name" value="Methyltrn_RNA_2"/>
    <property type="match status" value="1"/>
</dbReference>
<dbReference type="SUPFAM" id="SSF75217">
    <property type="entry name" value="alpha/beta knot"/>
    <property type="match status" value="1"/>
</dbReference>
<reference key="1">
    <citation type="journal article" date="2002" name="Proc. Natl. Acad. Sci. U.S.A.">
        <title>The complete genome of hyperthermophile Methanopyrus kandleri AV19 and monophyly of archaeal methanogens.</title>
        <authorList>
            <person name="Slesarev A.I."/>
            <person name="Mezhevaya K.V."/>
            <person name="Makarova K.S."/>
            <person name="Polushin N.N."/>
            <person name="Shcherbinina O.V."/>
            <person name="Shakhova V.V."/>
            <person name="Belova G.I."/>
            <person name="Aravind L."/>
            <person name="Natale D.A."/>
            <person name="Rogozin I.B."/>
            <person name="Tatusov R.L."/>
            <person name="Wolf Y.I."/>
            <person name="Stetter K.O."/>
            <person name="Malykh A.G."/>
            <person name="Koonin E.V."/>
            <person name="Kozyavkin S.A."/>
        </authorList>
    </citation>
    <scope>NUCLEOTIDE SEQUENCE [LARGE SCALE GENOMIC DNA]</scope>
    <source>
        <strain>AV19 / DSM 6324 / JCM 9639 / NBRC 100938</strain>
    </source>
</reference>
<sequence length="203" mass="23033">MREFLVLFNHAPTSPDRVRLKDLPGSGRFDLVCRVTTQALLYSHGVRTDTVVHLLLRGPDDPPKTITVTGRRVRRLYPDERTTAIHLRRALEADPDTEPHPGIFVRRADLEDLLGEMKGAKLYYLSEDGRDLEEVEPEPDAVFVLGDHEGPTPEQDRLLRRHADAVISLGPIPYHADQCIVILHRYLDVKRPPEYAHGPSNVM</sequence>
<comment type="function">
    <text evidence="1">Specifically catalyzes the N1-methylation of pseudouridine at position 54 (Psi54) in tRNAs.</text>
</comment>
<comment type="catalytic activity">
    <reaction evidence="1">
        <text>pseudouridine(54) in tRNA + S-adenosyl-L-methionine = N(1)-methylpseudouridine(54) in tRNA + S-adenosyl-L-homocysteine + H(+)</text>
        <dbReference type="Rhea" id="RHEA:55292"/>
        <dbReference type="Rhea" id="RHEA-COMP:14140"/>
        <dbReference type="Rhea" id="RHEA-COMP:14141"/>
        <dbReference type="ChEBI" id="CHEBI:15378"/>
        <dbReference type="ChEBI" id="CHEBI:57856"/>
        <dbReference type="ChEBI" id="CHEBI:59789"/>
        <dbReference type="ChEBI" id="CHEBI:65314"/>
        <dbReference type="ChEBI" id="CHEBI:74890"/>
        <dbReference type="EC" id="2.1.1.257"/>
    </reaction>
</comment>
<comment type="subunit">
    <text evidence="1">Homodimer.</text>
</comment>
<comment type="subcellular location">
    <subcellularLocation>
        <location evidence="1">Cytoplasm</location>
    </subcellularLocation>
</comment>
<comment type="similarity">
    <text evidence="1">Belongs to the methyltransferase superfamily. TrmY family.</text>
</comment>
<feature type="chain" id="PRO_0000157949" description="tRNA (pseudouridine(54)-N(1))-methyltransferase">
    <location>
        <begin position="1"/>
        <end position="203"/>
    </location>
</feature>
<feature type="binding site" evidence="1">
    <location>
        <position position="125"/>
    </location>
    <ligand>
        <name>S-adenosyl-L-methionine</name>
        <dbReference type="ChEBI" id="CHEBI:59789"/>
    </ligand>
</feature>
<feature type="binding site" evidence="1">
    <location>
        <position position="146"/>
    </location>
    <ligand>
        <name>S-adenosyl-L-methionine</name>
        <dbReference type="ChEBI" id="CHEBI:59789"/>
    </ligand>
</feature>
<feature type="binding site" evidence="1">
    <location>
        <position position="179"/>
    </location>
    <ligand>
        <name>S-adenosyl-L-methionine</name>
        <dbReference type="ChEBI" id="CHEBI:59789"/>
    </ligand>
</feature>
<name>TRMY_METKA</name>